<dbReference type="EMBL" id="U00096">
    <property type="protein sequence ID" value="AAC73908.1"/>
    <property type="molecule type" value="Genomic_DNA"/>
</dbReference>
<dbReference type="EMBL" id="AP009048">
    <property type="protein sequence ID" value="BAA35502.1"/>
    <property type="molecule type" value="Genomic_DNA"/>
</dbReference>
<dbReference type="PIR" id="E64819">
    <property type="entry name" value="E64819"/>
</dbReference>
<dbReference type="RefSeq" id="NP_415342.1">
    <property type="nucleotide sequence ID" value="NC_000913.3"/>
</dbReference>
<dbReference type="RefSeq" id="WP_000168797.1">
    <property type="nucleotide sequence ID" value="NZ_STEB01000019.1"/>
</dbReference>
<dbReference type="PDB" id="2DBI">
    <property type="method" value="X-ray"/>
    <property type="resolution" value="2.05 A"/>
    <property type="chains" value="A=1-421"/>
</dbReference>
<dbReference type="PDB" id="2DBN">
    <property type="method" value="X-ray"/>
    <property type="resolution" value="1.70 A"/>
    <property type="chains" value="A=1-421"/>
</dbReference>
<dbReference type="PDBsum" id="2DBI"/>
<dbReference type="PDBsum" id="2DBN"/>
<dbReference type="SMR" id="P75791"/>
<dbReference type="BioGRID" id="4263338">
    <property type="interactions" value="13"/>
</dbReference>
<dbReference type="DIP" id="DIP-11440N"/>
<dbReference type="FunCoup" id="P75791">
    <property type="interactions" value="46"/>
</dbReference>
<dbReference type="IntAct" id="P75791">
    <property type="interactions" value="3"/>
</dbReference>
<dbReference type="STRING" id="511145.b0821"/>
<dbReference type="jPOST" id="P75791"/>
<dbReference type="PaxDb" id="511145-b0821"/>
<dbReference type="EnsemblBacteria" id="AAC73908">
    <property type="protein sequence ID" value="AAC73908"/>
    <property type="gene ID" value="b0821"/>
</dbReference>
<dbReference type="GeneID" id="945439"/>
<dbReference type="KEGG" id="ecj:JW0805"/>
<dbReference type="KEGG" id="eco:b0821"/>
<dbReference type="KEGG" id="ecoc:C3026_05160"/>
<dbReference type="PATRIC" id="fig|511145.12.peg.848"/>
<dbReference type="EchoBASE" id="EB3110"/>
<dbReference type="eggNOG" id="ENOG502Z7SR">
    <property type="taxonomic scope" value="Bacteria"/>
</dbReference>
<dbReference type="HOGENOM" id="CLU_011148_1_0_6"/>
<dbReference type="InParanoid" id="P75791"/>
<dbReference type="OMA" id="ISEKWHP"/>
<dbReference type="OrthoDB" id="5620327at2"/>
<dbReference type="PhylomeDB" id="P75791"/>
<dbReference type="BioCyc" id="EcoCyc:G6424-MONOMER"/>
<dbReference type="EvolutionaryTrace" id="P75791"/>
<dbReference type="PRO" id="PR:P75791"/>
<dbReference type="Proteomes" id="UP000000625">
    <property type="component" value="Chromosome"/>
</dbReference>
<dbReference type="Gene3D" id="2.60.120.330">
    <property type="entry name" value="B-lactam Antibiotic, Isopenicillin N Synthase, Chain"/>
    <property type="match status" value="1"/>
</dbReference>
<dbReference type="InterPro" id="IPR010856">
    <property type="entry name" value="Gig2-like"/>
</dbReference>
<dbReference type="InterPro" id="IPR027443">
    <property type="entry name" value="IPNS-like_sf"/>
</dbReference>
<dbReference type="PANTHER" id="PTHR30613:SF1">
    <property type="entry name" value="DUF1479 DOMAIN PROTEIN (AFU_ORTHOLOGUE AFUA_5G09280)"/>
    <property type="match status" value="1"/>
</dbReference>
<dbReference type="PANTHER" id="PTHR30613">
    <property type="entry name" value="UNCHARACTERIZED PROTEIN YBIU-RELATED"/>
    <property type="match status" value="1"/>
</dbReference>
<dbReference type="Pfam" id="PF07350">
    <property type="entry name" value="Gig2-like"/>
    <property type="match status" value="1"/>
</dbReference>
<dbReference type="SUPFAM" id="SSF51197">
    <property type="entry name" value="Clavaminate synthase-like"/>
    <property type="match status" value="1"/>
</dbReference>
<sequence>MASTFTSDTLPADHKAAIRQMKHALRAQLGDVQQIFNQLSDDIATRVAEINALKAQGDAVWPVLSYADIKAGHVTAEQREQIKRRGCAVIKGHFPREQALGWDQSMLDYLDRNRFDEVYKGPGDNFFGTLSASRPEIYPIYWSQAQMQARQSEEMANAQSFLNRLWTFESDGKQWFNPDVSVIYPDRIRRRPPGTTSKGLGAHTDSGALERWLLPAYQRVFANVFNGNLAQYDPWHAAHRTEVEEYTVDNTTKCSVFRTFQGWTALSDMLPGQGLLHVVPIPEAMAYVLLRPLLDDVPEDELCGVAPGRVLPVSEQWHPLLIEALTSIPKLEAGDSVWWHCDVIHSVAPVENQQGWGNVMYIPAAPMCEKNLAYAHKVKAALEKGASPGDFPREDYETNWEGRFTLADLNIHGKRALGMDV</sequence>
<evidence type="ECO:0007829" key="1">
    <source>
        <dbReference type="PDB" id="2DBN"/>
    </source>
</evidence>
<feature type="chain" id="PRO_0000168728" description="Uncharacterized protein YbiU">
    <location>
        <begin position="1"/>
        <end position="421"/>
    </location>
</feature>
<feature type="turn" evidence="1">
    <location>
        <begin position="3"/>
        <end position="5"/>
    </location>
</feature>
<feature type="helix" evidence="1">
    <location>
        <begin position="14"/>
        <end position="29"/>
    </location>
</feature>
<feature type="helix" evidence="1">
    <location>
        <begin position="32"/>
        <end position="55"/>
    </location>
</feature>
<feature type="strand" evidence="1">
    <location>
        <begin position="63"/>
        <end position="65"/>
    </location>
</feature>
<feature type="helix" evidence="1">
    <location>
        <begin position="66"/>
        <end position="71"/>
    </location>
</feature>
<feature type="helix" evidence="1">
    <location>
        <begin position="76"/>
        <end position="85"/>
    </location>
</feature>
<feature type="strand" evidence="1">
    <location>
        <begin position="86"/>
        <end position="91"/>
    </location>
</feature>
<feature type="helix" evidence="1">
    <location>
        <begin position="96"/>
        <end position="112"/>
    </location>
</feature>
<feature type="helix" evidence="1">
    <location>
        <begin position="115"/>
        <end position="118"/>
    </location>
</feature>
<feature type="strand" evidence="1">
    <location>
        <begin position="136"/>
        <end position="138"/>
    </location>
</feature>
<feature type="helix" evidence="1">
    <location>
        <begin position="144"/>
        <end position="150"/>
    </location>
</feature>
<feature type="helix" evidence="1">
    <location>
        <begin position="153"/>
        <end position="163"/>
    </location>
</feature>
<feature type="strand" evidence="1">
    <location>
        <begin position="177"/>
        <end position="181"/>
    </location>
</feature>
<feature type="strand" evidence="1">
    <location>
        <begin position="188"/>
        <end position="190"/>
    </location>
</feature>
<feature type="strand" evidence="1">
    <location>
        <begin position="200"/>
        <end position="204"/>
    </location>
</feature>
<feature type="helix" evidence="1">
    <location>
        <begin position="210"/>
        <end position="213"/>
    </location>
</feature>
<feature type="helix" evidence="1">
    <location>
        <begin position="215"/>
        <end position="220"/>
    </location>
</feature>
<feature type="helix" evidence="1">
    <location>
        <begin position="222"/>
        <end position="225"/>
    </location>
</feature>
<feature type="helix" evidence="1">
    <location>
        <begin position="229"/>
        <end position="231"/>
    </location>
</feature>
<feature type="helix" evidence="1">
    <location>
        <begin position="240"/>
        <end position="242"/>
    </location>
</feature>
<feature type="strand" evidence="1">
    <location>
        <begin position="259"/>
        <end position="267"/>
    </location>
</feature>
<feature type="strand" evidence="1">
    <location>
        <begin position="276"/>
        <end position="278"/>
    </location>
</feature>
<feature type="helix" evidence="1">
    <location>
        <begin position="284"/>
        <end position="290"/>
    </location>
</feature>
<feature type="helix" evidence="1">
    <location>
        <begin position="291"/>
        <end position="293"/>
    </location>
</feature>
<feature type="turn" evidence="1">
    <location>
        <begin position="315"/>
        <end position="317"/>
    </location>
</feature>
<feature type="helix" evidence="1">
    <location>
        <begin position="319"/>
        <end position="322"/>
    </location>
</feature>
<feature type="strand" evidence="1">
    <location>
        <begin position="336"/>
        <end position="340"/>
    </location>
</feature>
<feature type="strand" evidence="1">
    <location>
        <begin position="345"/>
        <end position="347"/>
    </location>
</feature>
<feature type="strand" evidence="1">
    <location>
        <begin position="350"/>
        <end position="352"/>
    </location>
</feature>
<feature type="strand" evidence="1">
    <location>
        <begin position="359"/>
        <end position="361"/>
    </location>
</feature>
<feature type="strand" evidence="1">
    <location>
        <begin position="366"/>
        <end position="368"/>
    </location>
</feature>
<feature type="helix" evidence="1">
    <location>
        <begin position="369"/>
        <end position="384"/>
    </location>
</feature>
<feature type="helix" evidence="1">
    <location>
        <begin position="396"/>
        <end position="399"/>
    </location>
</feature>
<feature type="helix" evidence="1">
    <location>
        <begin position="406"/>
        <end position="408"/>
    </location>
</feature>
<feature type="helix" evidence="1">
    <location>
        <begin position="411"/>
        <end position="415"/>
    </location>
</feature>
<feature type="turn" evidence="1">
    <location>
        <begin position="416"/>
        <end position="418"/>
    </location>
</feature>
<reference key="1">
    <citation type="journal article" date="1996" name="DNA Res.">
        <title>A 718-kb DNA sequence of the Escherichia coli K-12 genome corresponding to the 12.7-28.0 min region on the linkage map.</title>
        <authorList>
            <person name="Oshima T."/>
            <person name="Aiba H."/>
            <person name="Baba T."/>
            <person name="Fujita K."/>
            <person name="Hayashi K."/>
            <person name="Honjo A."/>
            <person name="Ikemoto K."/>
            <person name="Inada T."/>
            <person name="Itoh T."/>
            <person name="Kajihara M."/>
            <person name="Kanai K."/>
            <person name="Kashimoto K."/>
            <person name="Kimura S."/>
            <person name="Kitagawa M."/>
            <person name="Makino K."/>
            <person name="Masuda S."/>
            <person name="Miki T."/>
            <person name="Mizobuchi K."/>
            <person name="Mori H."/>
            <person name="Motomura K."/>
            <person name="Nakamura Y."/>
            <person name="Nashimoto H."/>
            <person name="Nishio Y."/>
            <person name="Saito N."/>
            <person name="Sampei G."/>
            <person name="Seki Y."/>
            <person name="Tagami H."/>
            <person name="Takemoto K."/>
            <person name="Wada C."/>
            <person name="Yamamoto Y."/>
            <person name="Yano M."/>
            <person name="Horiuchi T."/>
        </authorList>
    </citation>
    <scope>NUCLEOTIDE SEQUENCE [LARGE SCALE GENOMIC DNA]</scope>
    <source>
        <strain>K12 / W3110 / ATCC 27325 / DSM 5911</strain>
    </source>
</reference>
<reference key="2">
    <citation type="journal article" date="1997" name="Science">
        <title>The complete genome sequence of Escherichia coli K-12.</title>
        <authorList>
            <person name="Blattner F.R."/>
            <person name="Plunkett G. III"/>
            <person name="Bloch C.A."/>
            <person name="Perna N.T."/>
            <person name="Burland V."/>
            <person name="Riley M."/>
            <person name="Collado-Vides J."/>
            <person name="Glasner J.D."/>
            <person name="Rode C.K."/>
            <person name="Mayhew G.F."/>
            <person name="Gregor J."/>
            <person name="Davis N.W."/>
            <person name="Kirkpatrick H.A."/>
            <person name="Goeden M.A."/>
            <person name="Rose D.J."/>
            <person name="Mau B."/>
            <person name="Shao Y."/>
        </authorList>
    </citation>
    <scope>NUCLEOTIDE SEQUENCE [LARGE SCALE GENOMIC DNA]</scope>
    <source>
        <strain>K12 / MG1655 / ATCC 47076</strain>
    </source>
</reference>
<reference key="3">
    <citation type="journal article" date="2006" name="Mol. Syst. Biol.">
        <title>Highly accurate genome sequences of Escherichia coli K-12 strains MG1655 and W3110.</title>
        <authorList>
            <person name="Hayashi K."/>
            <person name="Morooka N."/>
            <person name="Yamamoto Y."/>
            <person name="Fujita K."/>
            <person name="Isono K."/>
            <person name="Choi S."/>
            <person name="Ohtsubo E."/>
            <person name="Baba T."/>
            <person name="Wanner B.L."/>
            <person name="Mori H."/>
            <person name="Horiuchi T."/>
        </authorList>
    </citation>
    <scope>NUCLEOTIDE SEQUENCE [LARGE SCALE GENOMIC DNA]</scope>
    <source>
        <strain>K12 / W3110 / ATCC 27325 / DSM 5911</strain>
    </source>
</reference>
<reference key="4">
    <citation type="submission" date="2006-06" db="PDB data bank">
        <title>Crystal structure of a hypothetical protein JW0805 from Escherichia coli.</title>
        <authorList>
            <consortium name="RIKEN structural genomics initiative (RSGI)"/>
        </authorList>
    </citation>
    <scope>X-RAY CRYSTALLOGRAPHY (2.05 ANGSTROMS)</scope>
</reference>
<accession>P75791</accession>
<protein>
    <recommendedName>
        <fullName>Uncharacterized protein YbiU</fullName>
    </recommendedName>
</protein>
<name>YBIU_ECOLI</name>
<organism>
    <name type="scientific">Escherichia coli (strain K12)</name>
    <dbReference type="NCBI Taxonomy" id="83333"/>
    <lineage>
        <taxon>Bacteria</taxon>
        <taxon>Pseudomonadati</taxon>
        <taxon>Pseudomonadota</taxon>
        <taxon>Gammaproteobacteria</taxon>
        <taxon>Enterobacterales</taxon>
        <taxon>Enterobacteriaceae</taxon>
        <taxon>Escherichia</taxon>
    </lineage>
</organism>
<proteinExistence type="evidence at protein level"/>
<keyword id="KW-0002">3D-structure</keyword>
<keyword id="KW-1185">Reference proteome</keyword>
<gene>
    <name type="primary">ybiU</name>
    <name type="ordered locus">b0821</name>
    <name type="ordered locus">JW0805</name>
</gene>